<dbReference type="EMBL" id="AF143914">
    <property type="protein sequence ID" value="AAD29721.1"/>
    <property type="molecule type" value="Genomic_DNA"/>
</dbReference>
<dbReference type="SMR" id="Q9TH43"/>
<dbReference type="GO" id="GO:0005743">
    <property type="term" value="C:mitochondrial inner membrane"/>
    <property type="evidence" value="ECO:0007669"/>
    <property type="project" value="UniProtKB-SubCell"/>
</dbReference>
<dbReference type="GO" id="GO:0045275">
    <property type="term" value="C:respiratory chain complex III"/>
    <property type="evidence" value="ECO:0007669"/>
    <property type="project" value="InterPro"/>
</dbReference>
<dbReference type="GO" id="GO:0046872">
    <property type="term" value="F:metal ion binding"/>
    <property type="evidence" value="ECO:0007669"/>
    <property type="project" value="UniProtKB-KW"/>
</dbReference>
<dbReference type="GO" id="GO:0008121">
    <property type="term" value="F:ubiquinol-cytochrome-c reductase activity"/>
    <property type="evidence" value="ECO:0007669"/>
    <property type="project" value="InterPro"/>
</dbReference>
<dbReference type="GO" id="GO:0006122">
    <property type="term" value="P:mitochondrial electron transport, ubiquinol to cytochrome c"/>
    <property type="evidence" value="ECO:0007669"/>
    <property type="project" value="TreeGrafter"/>
</dbReference>
<dbReference type="CDD" id="cd00290">
    <property type="entry name" value="cytochrome_b_C"/>
    <property type="match status" value="1"/>
</dbReference>
<dbReference type="CDD" id="cd00284">
    <property type="entry name" value="Cytochrome_b_N"/>
    <property type="match status" value="1"/>
</dbReference>
<dbReference type="FunFam" id="1.20.810.10:FF:000002">
    <property type="entry name" value="Cytochrome b"/>
    <property type="match status" value="1"/>
</dbReference>
<dbReference type="Gene3D" id="1.20.810.10">
    <property type="entry name" value="Cytochrome Bc1 Complex, Chain C"/>
    <property type="match status" value="1"/>
</dbReference>
<dbReference type="InterPro" id="IPR005798">
    <property type="entry name" value="Cyt_b/b6_C"/>
</dbReference>
<dbReference type="InterPro" id="IPR036150">
    <property type="entry name" value="Cyt_b/b6_C_sf"/>
</dbReference>
<dbReference type="InterPro" id="IPR005797">
    <property type="entry name" value="Cyt_b/b6_N"/>
</dbReference>
<dbReference type="InterPro" id="IPR027387">
    <property type="entry name" value="Cytb/b6-like_sf"/>
</dbReference>
<dbReference type="InterPro" id="IPR030689">
    <property type="entry name" value="Cytochrome_b"/>
</dbReference>
<dbReference type="InterPro" id="IPR048260">
    <property type="entry name" value="Cytochrome_b_C_euk/bac"/>
</dbReference>
<dbReference type="InterPro" id="IPR048259">
    <property type="entry name" value="Cytochrome_b_N_euk/bac"/>
</dbReference>
<dbReference type="InterPro" id="IPR016174">
    <property type="entry name" value="Di-haem_cyt_TM"/>
</dbReference>
<dbReference type="PANTHER" id="PTHR19271">
    <property type="entry name" value="CYTOCHROME B"/>
    <property type="match status" value="1"/>
</dbReference>
<dbReference type="PANTHER" id="PTHR19271:SF16">
    <property type="entry name" value="CYTOCHROME B"/>
    <property type="match status" value="1"/>
</dbReference>
<dbReference type="Pfam" id="PF00032">
    <property type="entry name" value="Cytochrom_B_C"/>
    <property type="match status" value="1"/>
</dbReference>
<dbReference type="Pfam" id="PF00033">
    <property type="entry name" value="Cytochrome_B"/>
    <property type="match status" value="1"/>
</dbReference>
<dbReference type="PIRSF" id="PIRSF038885">
    <property type="entry name" value="COB"/>
    <property type="match status" value="1"/>
</dbReference>
<dbReference type="SUPFAM" id="SSF81648">
    <property type="entry name" value="a domain/subunit of cytochrome bc1 complex (Ubiquinol-cytochrome c reductase)"/>
    <property type="match status" value="1"/>
</dbReference>
<dbReference type="SUPFAM" id="SSF81342">
    <property type="entry name" value="Transmembrane di-heme cytochromes"/>
    <property type="match status" value="1"/>
</dbReference>
<dbReference type="PROSITE" id="PS51003">
    <property type="entry name" value="CYTB_CTER"/>
    <property type="match status" value="1"/>
</dbReference>
<dbReference type="PROSITE" id="PS51002">
    <property type="entry name" value="CYTB_NTER"/>
    <property type="match status" value="1"/>
</dbReference>
<organism>
    <name type="scientific">Marmota baibacina</name>
    <name type="common">Gray marmot</name>
    <dbReference type="NCBI Taxonomy" id="93157"/>
    <lineage>
        <taxon>Eukaryota</taxon>
        <taxon>Metazoa</taxon>
        <taxon>Chordata</taxon>
        <taxon>Craniata</taxon>
        <taxon>Vertebrata</taxon>
        <taxon>Euteleostomi</taxon>
        <taxon>Mammalia</taxon>
        <taxon>Eutheria</taxon>
        <taxon>Euarchontoglires</taxon>
        <taxon>Glires</taxon>
        <taxon>Rodentia</taxon>
        <taxon>Sciuromorpha</taxon>
        <taxon>Sciuridae</taxon>
        <taxon>Xerinae</taxon>
        <taxon>Marmotini</taxon>
        <taxon>Marmota</taxon>
    </lineage>
</organism>
<accession>Q9TH43</accession>
<keyword id="KW-0249">Electron transport</keyword>
<keyword id="KW-0349">Heme</keyword>
<keyword id="KW-0408">Iron</keyword>
<keyword id="KW-0472">Membrane</keyword>
<keyword id="KW-0479">Metal-binding</keyword>
<keyword id="KW-0496">Mitochondrion</keyword>
<keyword id="KW-0999">Mitochondrion inner membrane</keyword>
<keyword id="KW-0679">Respiratory chain</keyword>
<keyword id="KW-0812">Transmembrane</keyword>
<keyword id="KW-1133">Transmembrane helix</keyword>
<keyword id="KW-0813">Transport</keyword>
<keyword id="KW-0830">Ubiquinone</keyword>
<evidence type="ECO:0000250" key="1"/>
<evidence type="ECO:0000250" key="2">
    <source>
        <dbReference type="UniProtKB" id="P00157"/>
    </source>
</evidence>
<evidence type="ECO:0000255" key="3">
    <source>
        <dbReference type="PROSITE-ProRule" id="PRU00967"/>
    </source>
</evidence>
<evidence type="ECO:0000255" key="4">
    <source>
        <dbReference type="PROSITE-ProRule" id="PRU00968"/>
    </source>
</evidence>
<name>CYB_MARBA</name>
<reference key="1">
    <citation type="journal article" date="1999" name="Syst. Biol.">
        <title>Molecular phylogeny of the marmots (Rodentia: Sciuridae): tests of evolutionary and biogeographic hypotheses.</title>
        <authorList>
            <person name="Steppan S.J."/>
            <person name="Akhverdyan M.R."/>
            <person name="Lyapunova E.A."/>
            <person name="Fraser D.G."/>
            <person name="Vorontsov N.N."/>
            <person name="Hoffmann R.S."/>
            <person name="Braun M.J."/>
        </authorList>
    </citation>
    <scope>NUCLEOTIDE SEQUENCE [GENOMIC DNA]</scope>
    <source>
        <strain>Isolate kastschenkoi IDB_23766</strain>
    </source>
</reference>
<proteinExistence type="inferred from homology"/>
<feature type="chain" id="PRO_0000061152" description="Cytochrome b">
    <location>
        <begin position="1"/>
        <end position="379"/>
    </location>
</feature>
<feature type="transmembrane region" description="Helical" evidence="2">
    <location>
        <begin position="33"/>
        <end position="53"/>
    </location>
</feature>
<feature type="transmembrane region" description="Helical" evidence="2">
    <location>
        <begin position="77"/>
        <end position="98"/>
    </location>
</feature>
<feature type="transmembrane region" description="Helical" evidence="2">
    <location>
        <begin position="113"/>
        <end position="133"/>
    </location>
</feature>
<feature type="transmembrane region" description="Helical" evidence="2">
    <location>
        <begin position="178"/>
        <end position="198"/>
    </location>
</feature>
<feature type="transmembrane region" description="Helical" evidence="2">
    <location>
        <begin position="226"/>
        <end position="246"/>
    </location>
</feature>
<feature type="transmembrane region" description="Helical" evidence="2">
    <location>
        <begin position="288"/>
        <end position="308"/>
    </location>
</feature>
<feature type="transmembrane region" description="Helical" evidence="2">
    <location>
        <begin position="320"/>
        <end position="340"/>
    </location>
</feature>
<feature type="transmembrane region" description="Helical" evidence="2">
    <location>
        <begin position="347"/>
        <end position="367"/>
    </location>
</feature>
<feature type="binding site" description="axial binding residue" evidence="2">
    <location>
        <position position="83"/>
    </location>
    <ligand>
        <name>heme b</name>
        <dbReference type="ChEBI" id="CHEBI:60344"/>
        <label>b562</label>
    </ligand>
    <ligandPart>
        <name>Fe</name>
        <dbReference type="ChEBI" id="CHEBI:18248"/>
    </ligandPart>
</feature>
<feature type="binding site" description="axial binding residue" evidence="2">
    <location>
        <position position="97"/>
    </location>
    <ligand>
        <name>heme b</name>
        <dbReference type="ChEBI" id="CHEBI:60344"/>
        <label>b566</label>
    </ligand>
    <ligandPart>
        <name>Fe</name>
        <dbReference type="ChEBI" id="CHEBI:18248"/>
    </ligandPart>
</feature>
<feature type="binding site" description="axial binding residue" evidence="2">
    <location>
        <position position="182"/>
    </location>
    <ligand>
        <name>heme b</name>
        <dbReference type="ChEBI" id="CHEBI:60344"/>
        <label>b562</label>
    </ligand>
    <ligandPart>
        <name>Fe</name>
        <dbReference type="ChEBI" id="CHEBI:18248"/>
    </ligandPart>
</feature>
<feature type="binding site" description="axial binding residue" evidence="2">
    <location>
        <position position="196"/>
    </location>
    <ligand>
        <name>heme b</name>
        <dbReference type="ChEBI" id="CHEBI:60344"/>
        <label>b566</label>
    </ligand>
    <ligandPart>
        <name>Fe</name>
        <dbReference type="ChEBI" id="CHEBI:18248"/>
    </ligandPart>
</feature>
<feature type="binding site" evidence="2">
    <location>
        <position position="201"/>
    </location>
    <ligand>
        <name>a ubiquinone</name>
        <dbReference type="ChEBI" id="CHEBI:16389"/>
    </ligand>
</feature>
<gene>
    <name type="primary">MT-CYB</name>
    <name type="synonym">COB</name>
    <name type="synonym">CYTB</name>
    <name type="synonym">MTCYB</name>
</gene>
<geneLocation type="mitochondrion"/>
<comment type="function">
    <text evidence="2">Component of the ubiquinol-cytochrome c reductase complex (complex III or cytochrome b-c1 complex) that is part of the mitochondrial respiratory chain. The b-c1 complex mediates electron transfer from ubiquinol to cytochrome c. Contributes to the generation of a proton gradient across the mitochondrial membrane that is then used for ATP synthesis.</text>
</comment>
<comment type="cofactor">
    <cofactor evidence="2">
        <name>heme b</name>
        <dbReference type="ChEBI" id="CHEBI:60344"/>
    </cofactor>
    <text evidence="2">Binds 2 heme b groups non-covalently.</text>
</comment>
<comment type="subunit">
    <text evidence="2">The cytochrome bc1 complex contains 11 subunits: 3 respiratory subunits (MT-CYB, CYC1 and UQCRFS1), 2 core proteins (UQCRC1 and UQCRC2) and 6 low-molecular weight proteins (UQCRH/QCR6, UQCRB/QCR7, UQCRQ/QCR8, UQCR10/QCR9, UQCR11/QCR10 and a cleavage product of UQCRFS1). This cytochrome bc1 complex then forms a dimer.</text>
</comment>
<comment type="subcellular location">
    <subcellularLocation>
        <location evidence="2">Mitochondrion inner membrane</location>
        <topology evidence="2">Multi-pass membrane protein</topology>
    </subcellularLocation>
</comment>
<comment type="miscellaneous">
    <text evidence="1">Heme 1 (or BL or b562) is low-potential and absorbs at about 562 nm, and heme 2 (or BH or b566) is high-potential and absorbs at about 566 nm.</text>
</comment>
<comment type="similarity">
    <text evidence="3 4">Belongs to the cytochrome b family.</text>
</comment>
<comment type="caution">
    <text evidence="2">The full-length protein contains only eight transmembrane helices, not nine as predicted by bioinformatics tools.</text>
</comment>
<protein>
    <recommendedName>
        <fullName>Cytochrome b</fullName>
    </recommendedName>
    <alternativeName>
        <fullName>Complex III subunit 3</fullName>
    </alternativeName>
    <alternativeName>
        <fullName>Complex III subunit III</fullName>
    </alternativeName>
    <alternativeName>
        <fullName>Cytochrome b-c1 complex subunit 3</fullName>
    </alternativeName>
    <alternativeName>
        <fullName>Ubiquinol-cytochrome-c reductase complex cytochrome b subunit</fullName>
    </alternativeName>
</protein>
<sequence length="379" mass="43165">MTNIRKTHPLIKIINHSFIDLPAPSNISTWWNFGSLLGFCLVTQILTGLFLAMHYTSDTMTAFSSVTHICRDVNYGWLIRYMHANGASMFFICLFLHVGRGMYYGSYIYFETWNIGVILLFVVMATAFMGYVLPWGQMSFWGATVITNLLSAIPYIGTTLVEWIWGGFSVDKATLTRFFAFHFILPFIIAALAMIHLLFLHETGSNNPSGLISDSDKIPFHPYYTIKDILGVLLLILILMILVLFSPDFLGDPDNYTPANPLSTPPHIKPEWYFLFAYAILRSIPNKLGGVLALIFSILILMLFPLLHLSKQRSMMFRPLSQCMFWILVADLITLTWIGGQPVEYPYVIIGQFASILYFTIILLILPIISLIENKLLKW</sequence>